<keyword id="KW-0004">4Fe-4S</keyword>
<keyword id="KW-0997">Cell inner membrane</keyword>
<keyword id="KW-1003">Cell membrane</keyword>
<keyword id="KW-0408">Iron</keyword>
<keyword id="KW-0411">Iron-sulfur</keyword>
<keyword id="KW-0472">Membrane</keyword>
<keyword id="KW-0479">Metal-binding</keyword>
<keyword id="KW-0520">NAD</keyword>
<keyword id="KW-0874">Quinone</keyword>
<keyword id="KW-1185">Reference proteome</keyword>
<keyword id="KW-1278">Translocase</keyword>
<keyword id="KW-0813">Transport</keyword>
<keyword id="KW-0830">Ubiquinone</keyword>
<feature type="chain" id="PRO_0000376217" description="NADH-quinone oxidoreductase subunit B">
    <location>
        <begin position="1"/>
        <end position="220"/>
    </location>
</feature>
<feature type="binding site" evidence="1">
    <location>
        <position position="63"/>
    </location>
    <ligand>
        <name>[4Fe-4S] cluster</name>
        <dbReference type="ChEBI" id="CHEBI:49883"/>
    </ligand>
</feature>
<feature type="binding site" evidence="1">
    <location>
        <position position="64"/>
    </location>
    <ligand>
        <name>[4Fe-4S] cluster</name>
        <dbReference type="ChEBI" id="CHEBI:49883"/>
    </ligand>
</feature>
<feature type="binding site" evidence="1">
    <location>
        <position position="129"/>
    </location>
    <ligand>
        <name>[4Fe-4S] cluster</name>
        <dbReference type="ChEBI" id="CHEBI:49883"/>
    </ligand>
</feature>
<feature type="binding site" evidence="1">
    <location>
        <position position="158"/>
    </location>
    <ligand>
        <name>[4Fe-4S] cluster</name>
        <dbReference type="ChEBI" id="CHEBI:49883"/>
    </ligand>
</feature>
<gene>
    <name evidence="1" type="primary">nuoB</name>
    <name type="ordered locus">ECS88_2434</name>
</gene>
<organism>
    <name type="scientific">Escherichia coli O45:K1 (strain S88 / ExPEC)</name>
    <dbReference type="NCBI Taxonomy" id="585035"/>
    <lineage>
        <taxon>Bacteria</taxon>
        <taxon>Pseudomonadati</taxon>
        <taxon>Pseudomonadota</taxon>
        <taxon>Gammaproteobacteria</taxon>
        <taxon>Enterobacterales</taxon>
        <taxon>Enterobacteriaceae</taxon>
        <taxon>Escherichia</taxon>
    </lineage>
</organism>
<reference key="1">
    <citation type="journal article" date="2009" name="PLoS Genet.">
        <title>Organised genome dynamics in the Escherichia coli species results in highly diverse adaptive paths.</title>
        <authorList>
            <person name="Touchon M."/>
            <person name="Hoede C."/>
            <person name="Tenaillon O."/>
            <person name="Barbe V."/>
            <person name="Baeriswyl S."/>
            <person name="Bidet P."/>
            <person name="Bingen E."/>
            <person name="Bonacorsi S."/>
            <person name="Bouchier C."/>
            <person name="Bouvet O."/>
            <person name="Calteau A."/>
            <person name="Chiapello H."/>
            <person name="Clermont O."/>
            <person name="Cruveiller S."/>
            <person name="Danchin A."/>
            <person name="Diard M."/>
            <person name="Dossat C."/>
            <person name="Karoui M.E."/>
            <person name="Frapy E."/>
            <person name="Garry L."/>
            <person name="Ghigo J.M."/>
            <person name="Gilles A.M."/>
            <person name="Johnson J."/>
            <person name="Le Bouguenec C."/>
            <person name="Lescat M."/>
            <person name="Mangenot S."/>
            <person name="Martinez-Jehanne V."/>
            <person name="Matic I."/>
            <person name="Nassif X."/>
            <person name="Oztas S."/>
            <person name="Petit M.A."/>
            <person name="Pichon C."/>
            <person name="Rouy Z."/>
            <person name="Ruf C.S."/>
            <person name="Schneider D."/>
            <person name="Tourret J."/>
            <person name="Vacherie B."/>
            <person name="Vallenet D."/>
            <person name="Medigue C."/>
            <person name="Rocha E.P.C."/>
            <person name="Denamur E."/>
        </authorList>
    </citation>
    <scope>NUCLEOTIDE SEQUENCE [LARGE SCALE GENOMIC DNA]</scope>
    <source>
        <strain>S88 / ExPEC</strain>
    </source>
</reference>
<proteinExistence type="inferred from homology"/>
<dbReference type="EC" id="7.1.1.-" evidence="1"/>
<dbReference type="EMBL" id="CU928161">
    <property type="protein sequence ID" value="CAR03713.1"/>
    <property type="molecule type" value="Genomic_DNA"/>
</dbReference>
<dbReference type="RefSeq" id="WP_000386733.1">
    <property type="nucleotide sequence ID" value="NC_011742.1"/>
</dbReference>
<dbReference type="SMR" id="B7MG51"/>
<dbReference type="GeneID" id="93774887"/>
<dbReference type="KEGG" id="ecz:ECS88_2434"/>
<dbReference type="HOGENOM" id="CLU_055737_7_3_6"/>
<dbReference type="Proteomes" id="UP000000747">
    <property type="component" value="Chromosome"/>
</dbReference>
<dbReference type="GO" id="GO:0005886">
    <property type="term" value="C:plasma membrane"/>
    <property type="evidence" value="ECO:0007669"/>
    <property type="project" value="UniProtKB-SubCell"/>
</dbReference>
<dbReference type="GO" id="GO:0045271">
    <property type="term" value="C:respiratory chain complex I"/>
    <property type="evidence" value="ECO:0007669"/>
    <property type="project" value="TreeGrafter"/>
</dbReference>
<dbReference type="GO" id="GO:0051539">
    <property type="term" value="F:4 iron, 4 sulfur cluster binding"/>
    <property type="evidence" value="ECO:0007669"/>
    <property type="project" value="UniProtKB-KW"/>
</dbReference>
<dbReference type="GO" id="GO:0005506">
    <property type="term" value="F:iron ion binding"/>
    <property type="evidence" value="ECO:0007669"/>
    <property type="project" value="UniProtKB-UniRule"/>
</dbReference>
<dbReference type="GO" id="GO:0008137">
    <property type="term" value="F:NADH dehydrogenase (ubiquinone) activity"/>
    <property type="evidence" value="ECO:0007669"/>
    <property type="project" value="InterPro"/>
</dbReference>
<dbReference type="GO" id="GO:0050136">
    <property type="term" value="F:NADH:ubiquinone reductase (non-electrogenic) activity"/>
    <property type="evidence" value="ECO:0007669"/>
    <property type="project" value="UniProtKB-UniRule"/>
</dbReference>
<dbReference type="GO" id="GO:0048038">
    <property type="term" value="F:quinone binding"/>
    <property type="evidence" value="ECO:0007669"/>
    <property type="project" value="UniProtKB-KW"/>
</dbReference>
<dbReference type="GO" id="GO:0009060">
    <property type="term" value="P:aerobic respiration"/>
    <property type="evidence" value="ECO:0007669"/>
    <property type="project" value="TreeGrafter"/>
</dbReference>
<dbReference type="GO" id="GO:0015990">
    <property type="term" value="P:electron transport coupled proton transport"/>
    <property type="evidence" value="ECO:0007669"/>
    <property type="project" value="TreeGrafter"/>
</dbReference>
<dbReference type="FunFam" id="3.40.50.12280:FF:000002">
    <property type="entry name" value="NADH-quinone oxidoreductase subunit B"/>
    <property type="match status" value="1"/>
</dbReference>
<dbReference type="Gene3D" id="3.40.50.12280">
    <property type="match status" value="1"/>
</dbReference>
<dbReference type="HAMAP" id="MF_01356">
    <property type="entry name" value="NDH1_NuoB"/>
    <property type="match status" value="1"/>
</dbReference>
<dbReference type="InterPro" id="IPR006137">
    <property type="entry name" value="NADH_UbQ_OxRdtase-like_20kDa"/>
</dbReference>
<dbReference type="InterPro" id="IPR006138">
    <property type="entry name" value="NADH_UQ_OxRdtase_20Kd_su"/>
</dbReference>
<dbReference type="NCBIfam" id="TIGR01957">
    <property type="entry name" value="nuoB_fam"/>
    <property type="match status" value="1"/>
</dbReference>
<dbReference type="NCBIfam" id="NF005012">
    <property type="entry name" value="PRK06411.1"/>
    <property type="match status" value="1"/>
</dbReference>
<dbReference type="PANTHER" id="PTHR11995">
    <property type="entry name" value="NADH DEHYDROGENASE"/>
    <property type="match status" value="1"/>
</dbReference>
<dbReference type="PANTHER" id="PTHR11995:SF14">
    <property type="entry name" value="NADH DEHYDROGENASE [UBIQUINONE] IRON-SULFUR PROTEIN 7, MITOCHONDRIAL"/>
    <property type="match status" value="1"/>
</dbReference>
<dbReference type="Pfam" id="PF01058">
    <property type="entry name" value="Oxidored_q6"/>
    <property type="match status" value="1"/>
</dbReference>
<dbReference type="SUPFAM" id="SSF56770">
    <property type="entry name" value="HydA/Nqo6-like"/>
    <property type="match status" value="1"/>
</dbReference>
<dbReference type="PROSITE" id="PS01150">
    <property type="entry name" value="COMPLEX1_20K"/>
    <property type="match status" value="1"/>
</dbReference>
<protein>
    <recommendedName>
        <fullName evidence="1">NADH-quinone oxidoreductase subunit B</fullName>
        <ecNumber evidence="1">7.1.1.-</ecNumber>
    </recommendedName>
    <alternativeName>
        <fullName evidence="1">NADH dehydrogenase I subunit B</fullName>
    </alternativeName>
    <alternativeName>
        <fullName evidence="1">NDH-1 subunit B</fullName>
    </alternativeName>
</protein>
<sequence length="220" mass="25056">MDYTLTRIDPNGENDRYPLQKQEIVTDPLEQEVNKNVFMGKLNDMVNWGRKNSIWPYNFGLSCCYVEMVTSFTAVHDVARFGAEVLRASPRQADLMVVAGTCFTKMAPVIQRLYDQMLEPKWVISMGACANSGGMYDIYSVVQGVDKFIPVDVYIPGCPPRPEAYMQALMLLQESIGKERRPLSWVVGDQGVYRANMQSERERKRGERIAVTNLRTPDEI</sequence>
<evidence type="ECO:0000255" key="1">
    <source>
        <dbReference type="HAMAP-Rule" id="MF_01356"/>
    </source>
</evidence>
<accession>B7MG51</accession>
<comment type="function">
    <text evidence="1">NDH-1 shuttles electrons from NADH, via FMN and iron-sulfur (Fe-S) centers, to quinones in the respiratory chain. The immediate electron acceptor for the enzyme in this species is believed to be ubiquinone. Couples the redox reaction to proton translocation (for every two electrons transferred, four hydrogen ions are translocated across the cytoplasmic membrane), and thus conserves the redox energy in a proton gradient.</text>
</comment>
<comment type="catalytic activity">
    <reaction evidence="1">
        <text>a quinone + NADH + 5 H(+)(in) = a quinol + NAD(+) + 4 H(+)(out)</text>
        <dbReference type="Rhea" id="RHEA:57888"/>
        <dbReference type="ChEBI" id="CHEBI:15378"/>
        <dbReference type="ChEBI" id="CHEBI:24646"/>
        <dbReference type="ChEBI" id="CHEBI:57540"/>
        <dbReference type="ChEBI" id="CHEBI:57945"/>
        <dbReference type="ChEBI" id="CHEBI:132124"/>
    </reaction>
</comment>
<comment type="cofactor">
    <cofactor evidence="1">
        <name>[4Fe-4S] cluster</name>
        <dbReference type="ChEBI" id="CHEBI:49883"/>
    </cofactor>
    <text evidence="1">Binds 1 [4Fe-4S] cluster.</text>
</comment>
<comment type="subunit">
    <text evidence="1">NDH-1 is composed of 13 different subunits. Subunits NuoB, CD, E, F, and G constitute the peripheral sector of the complex.</text>
</comment>
<comment type="subcellular location">
    <subcellularLocation>
        <location evidence="1">Cell inner membrane</location>
        <topology evidence="1">Peripheral membrane protein</topology>
        <orientation evidence="1">Cytoplasmic side</orientation>
    </subcellularLocation>
</comment>
<comment type="similarity">
    <text evidence="1">Belongs to the complex I 20 kDa subunit family.</text>
</comment>
<name>NUOB_ECO45</name>